<reference key="1">
    <citation type="journal article" date="1989" name="Cell">
        <title>Two erbA homologs encoding proteins with different T3 binding capacities are transcribed from opposite DNA strands of the same genetic locus.</title>
        <authorList>
            <person name="Miyajima N."/>
            <person name="Horiuchi R."/>
            <person name="Shibuya Y."/>
            <person name="Fukushige S."/>
            <person name="Matsubara K."/>
            <person name="Toyoshima K."/>
            <person name="Yamamoto T."/>
        </authorList>
    </citation>
    <scope>NUCLEOTIDE SEQUENCE [MRNA]</scope>
    <scope>FUNCTION</scope>
    <scope>TISSUE SPECIFICITY</scope>
    <source>
        <tissue>Placenta</tissue>
    </source>
</reference>
<reference key="2">
    <citation type="journal article" date="1990" name="DNA Cell Biol.">
        <title>Isolation of a cDNA encoding human Rev-ErbA alpha: transcription from the noncoding DNA strand of a thyroid hormone receptor gene results in a related protein that does not bind thyroid hormone.</title>
        <authorList>
            <person name="Lazar M.A."/>
            <person name="Jones K.E."/>
            <person name="Chin W.W."/>
        </authorList>
    </citation>
    <scope>NUCLEOTIDE SEQUENCE [MRNA]</scope>
    <scope>FUNCTION</scope>
    <source>
        <tissue>Fetal skeletal muscle</tissue>
    </source>
</reference>
<reference key="3">
    <citation type="journal article" date="2004" name="Genome Res.">
        <title>The status, quality, and expansion of the NIH full-length cDNA project: the Mammalian Gene Collection (MGC).</title>
        <authorList>
            <consortium name="The MGC Project Team"/>
        </authorList>
    </citation>
    <scope>NUCLEOTIDE SEQUENCE [LARGE SCALE MRNA]</scope>
    <source>
        <tissue>PNS</tissue>
    </source>
</reference>
<reference key="4">
    <citation type="journal article" date="1991" name="Nucleic Acids Res.">
        <title>Genomic organization of the human thyroid hormone receptor alpha (c-erbA-1) gene.</title>
        <authorList>
            <person name="Laudet V."/>
            <person name="Begue A."/>
            <person name="Henry C."/>
            <person name="Joubel A."/>
            <person name="Martin P."/>
            <person name="Stehelin D."/>
            <person name="Saule S."/>
        </authorList>
    </citation>
    <scope>NUCLEOTIDE SEQUENCE [GENOMIC DNA] OF 549-614</scope>
</reference>
<reference key="5">
    <citation type="journal article" date="2002" name="J. Biol. Chem.">
        <title>Orphan nuclear hormone receptor Rev-erbalpha regulates the human apolipoprotein CIII promoter.</title>
        <authorList>
            <person name="Coste H."/>
            <person name="Rodriguez J.C."/>
        </authorList>
    </citation>
    <scope>FUNCTION</scope>
</reference>
<reference key="6">
    <citation type="journal article" date="2005" name="Mol. Endocrinol.">
        <title>The orphan nuclear receptor Rev-erbalpha recruits the N-CoR/histone deacetylase 3 corepressor to regulate the circadian Bmal1 gene.</title>
        <authorList>
            <person name="Yin L."/>
            <person name="Lazar M.A."/>
        </authorList>
    </citation>
    <scope>FUNCTION</scope>
</reference>
<reference key="7">
    <citation type="journal article" date="2006" name="J. Biol. Chem.">
        <title>The orphan nuclear receptor Rev-erb alpha regulates circadian expression of plasminogen activator inhibitor type 1.</title>
        <authorList>
            <person name="Wang J."/>
            <person name="Yin L."/>
            <person name="Lazar M.A."/>
        </authorList>
    </citation>
    <scope>FUNCTION</scope>
</reference>
<reference key="8">
    <citation type="journal article" date="2006" name="Science">
        <title>Nuclear receptor Rev-erbalpha is a critical lithium-sensitive component of the circadian clock.</title>
        <authorList>
            <person name="Yin L."/>
            <person name="Wang J."/>
            <person name="Klein P.S."/>
            <person name="Lazar M.A."/>
        </authorList>
    </citation>
    <scope>PHOSPHORYLATION AT SER-55 AND SER-59</scope>
    <scope>UBIQUITINATION</scope>
</reference>
<reference key="9">
    <citation type="journal article" date="2007" name="FEBS J.">
        <title>A zinc finger HIT domain-containing protein, ZNHIT-1, interacts with orphan nuclear hormone receptor Rev-erbbeta and removes Rev-erbbeta-induced inhibition of apoCIII transcription.</title>
        <authorList>
            <person name="Wang J."/>
            <person name="Li Y."/>
            <person name="Zhang M."/>
            <person name="Liu Z."/>
            <person name="Wu C."/>
            <person name="Yuan H."/>
            <person name="Li Y.Y."/>
            <person name="Zhao X."/>
            <person name="Lu H."/>
        </authorList>
    </citation>
    <scope>INTERACTION WITH ZNHIT1</scope>
</reference>
<reference key="10">
    <citation type="journal article" date="2007" name="Science">
        <title>Rev-erbalpha, a heme sensor that coordinates metabolic and circadian pathways.</title>
        <authorList>
            <person name="Yin L."/>
            <person name="Wu N."/>
            <person name="Curtin J.C."/>
            <person name="Qatanani M."/>
            <person name="Szwergold N.R."/>
            <person name="Reid R.A."/>
            <person name="Waitt G.M."/>
            <person name="Parks D.J."/>
            <person name="Pearce K.H."/>
            <person name="Wisely G.B."/>
            <person name="Lazar M.A."/>
        </authorList>
    </citation>
    <scope>FUNCTION</scope>
    <scope>HEME-BINDING</scope>
</reference>
<reference key="11">
    <citation type="journal article" date="2009" name="Genes Dev.">
        <title>Negative feedback maintenance of heme homeostasis by its receptor, Rev-erbalpha.</title>
        <authorList>
            <person name="Wu N."/>
            <person name="Yin L."/>
            <person name="Hanniman E.A."/>
            <person name="Joshi S."/>
            <person name="Lazar M.A."/>
        </authorList>
    </citation>
    <scope>FUNCTION</scope>
</reference>
<reference key="12">
    <citation type="journal article" date="2010" name="Nucl. Recept. Signal.">
        <title>Nuclear receptor Rev-erbalpha: a heme receptor that coordinates circadian rhythm and metabolism.</title>
        <authorList>
            <person name="Yin L."/>
            <person name="Wu N."/>
            <person name="Lazar M.A."/>
        </authorList>
    </citation>
    <scope>REVIEW</scope>
</reference>
<reference key="13">
    <citation type="journal article" date="2010" name="Proc. Natl. Acad. Sci. U.S.A.">
        <title>E3 ligases Arf-bp1 and Pam mediate lithium-stimulated degradation of the circadian heme receptor Rev-erb alpha.</title>
        <authorList>
            <person name="Yin L."/>
            <person name="Joshi S."/>
            <person name="Wu N."/>
            <person name="Tong X."/>
            <person name="Lazar M.A."/>
        </authorList>
    </citation>
    <scope>INTERACTION WITH HUWE1</scope>
    <scope>UBIQUITINATION AND PROTEASOMAL DEGRADATION</scope>
</reference>
<reference key="14">
    <citation type="journal article" date="2011" name="Nat. Neurosci.">
        <title>A circadian clock in hippocampus is regulated by interaction between oligophrenin-1 and Rev-erbalpha.</title>
        <authorList>
            <person name="Valnegri P."/>
            <person name="Khelfaoui M."/>
            <person name="Dorseuil O."/>
            <person name="Bassani S."/>
            <person name="Lagneaux C."/>
            <person name="Gianfelice A."/>
            <person name="Benfante R."/>
            <person name="Chelly J."/>
            <person name="Billuart P."/>
            <person name="Sala C."/>
            <person name="Passafaro M."/>
        </authorList>
    </citation>
    <scope>INTERACTION WITH OPHN1</scope>
</reference>
<reference key="15">
    <citation type="journal article" date="2011" name="Nature">
        <title>Cryptochromes mediate rhythmic repression of the glucocorticoid receptor.</title>
        <authorList>
            <person name="Lamia K.A."/>
            <person name="Papp S.J."/>
            <person name="Yu R.T."/>
            <person name="Barish G.D."/>
            <person name="Uhlenhaut N.H."/>
            <person name="Jonker J.W."/>
            <person name="Downes M."/>
            <person name="Evans R.M."/>
        </authorList>
    </citation>
    <scope>INTERACTION WITH CRY1 AND PER2</scope>
</reference>
<reference key="16">
    <citation type="journal article" date="2011" name="PLoS ONE">
        <title>Direct regulation of CLOCK expression by REV-ERB.</title>
        <authorList>
            <person name="Crumbley C."/>
            <person name="Burris T.P."/>
        </authorList>
    </citation>
    <scope>FUNCTION</scope>
</reference>
<reference key="17">
    <citation type="journal article" date="2012" name="Cell Metab.">
        <title>REV-ERBs: more than the sum of the individual parts.</title>
        <authorList>
            <person name="Stratmann M."/>
            <person name="Schibler U."/>
        </authorList>
    </citation>
    <scope>REVIEW</scope>
</reference>
<reference key="18">
    <citation type="journal article" date="2012" name="Cell Res.">
        <title>REV-ERB-erating nuclear receptor functions in circadian metabolism and physiology.</title>
        <authorList>
            <person name="Ripperger J.A."/>
            <person name="Albrecht U."/>
        </authorList>
    </citation>
    <scope>REVIEW</scope>
</reference>
<reference key="19">
    <citation type="journal article" date="2012" name="Proc. Natl. Acad. Sci. U.S.A.">
        <title>The nuclear receptor REV-ERBalpha mediates circadian regulation of innate immunity through selective regulation of inflammatory cytokines.</title>
        <authorList>
            <person name="Gibbs J.E."/>
            <person name="Blaikley J."/>
            <person name="Beesley S."/>
            <person name="Matthews L."/>
            <person name="Simpson K.D."/>
            <person name="Boyce S.H."/>
            <person name="Farrow S.N."/>
            <person name="Else K.J."/>
            <person name="Singh D."/>
            <person name="Ray D.W."/>
            <person name="Loudon A.S."/>
        </authorList>
    </citation>
    <scope>FUNCTION</scope>
</reference>
<reference key="20">
    <citation type="journal article" date="2013" name="Biochem. J.">
        <title>DBC1 (Deleted in Breast Cancer 1) modulates the stability and function of the nuclear receptor Rev-erbalpha.</title>
        <authorList>
            <person name="Chini C.C."/>
            <person name="Escande C."/>
            <person name="Nin V."/>
            <person name="Chini E.N."/>
        </authorList>
    </citation>
    <scope>FUNCTION</scope>
    <scope>INTERACTION WITH CCAR2</scope>
    <scope>PHOSPHORYLATION AT SER-55 AND SER-59</scope>
    <scope>UBIQUITINATION</scope>
</reference>
<reference key="21">
    <citation type="journal article" date="2014" name="J. Biol. Chem.">
        <title>Deleted in breast cancer 1 (DBC1) protein regulates hepatic gluconeogenesis.</title>
        <authorList>
            <person name="Nin V."/>
            <person name="Chini C.C."/>
            <person name="Escande C."/>
            <person name="Capellini V."/>
            <person name="Chini E.N."/>
        </authorList>
    </citation>
    <scope>ACETYLATION AT LYS-400 AND LYS-591</scope>
</reference>
<reference key="22">
    <citation type="journal article" date="2014" name="J. Proteomics">
        <title>An enzyme assisted RP-RPLC approach for in-depth analysis of human liver phosphoproteome.</title>
        <authorList>
            <person name="Bian Y."/>
            <person name="Song C."/>
            <person name="Cheng K."/>
            <person name="Dong M."/>
            <person name="Wang F."/>
            <person name="Huang J."/>
            <person name="Sun D."/>
            <person name="Wang L."/>
            <person name="Ye M."/>
            <person name="Zou H."/>
        </authorList>
    </citation>
    <scope>IDENTIFICATION BY MASS SPECTROMETRY [LARGE SCALE ANALYSIS]</scope>
    <source>
        <tissue>Liver</tissue>
    </source>
</reference>
<reference key="23">
    <citation type="journal article" date="2015" name="Proc. Natl. Acad. Sci. U.S.A.">
        <title>Ubiquitin ligase Siah2 regulates RevErbalpha degradation and the mammalian circadian clock.</title>
        <authorList>
            <person name="DeBruyne J.P."/>
            <person name="Baggs J.E."/>
            <person name="Sato T.K."/>
            <person name="Hogenesch J.B."/>
        </authorList>
    </citation>
    <scope>UBIQUITINATION</scope>
    <scope>PROTEASOMAL DEGRADATION</scope>
    <scope>INTERACTION WITH SIAH2</scope>
</reference>
<reference key="24">
    <citation type="journal article" date="2016" name="Cell">
        <title>Circadian amplitude regulation via FBXW7-targeted REV-ERBalpha degradation.</title>
        <authorList>
            <person name="Zhao X."/>
            <person name="Hirota T."/>
            <person name="Han X."/>
            <person name="Cho H."/>
            <person name="Chong L.W."/>
            <person name="Lamia K."/>
            <person name="Liu S."/>
            <person name="Atkins A.R."/>
            <person name="Banayo E."/>
            <person name="Liddle C."/>
            <person name="Yu R.T."/>
            <person name="Yates J.R. III"/>
            <person name="Kay S.A."/>
            <person name="Downes M."/>
            <person name="Evans R.M."/>
        </authorList>
    </citation>
    <scope>INTERACTION WITH FBXW7</scope>
</reference>
<reference key="25">
    <citation type="journal article" date="1998" name="Mol. Cell">
        <title>Structural elements of an orphan nuclear receptor-DNA complex.</title>
        <authorList>
            <person name="Zhao Q."/>
            <person name="Khorasanizadeh S."/>
            <person name="Miyoshi Y."/>
            <person name="Lazar M.A."/>
            <person name="Rastinejad F."/>
        </authorList>
    </citation>
    <scope>X-RAY CRYSTALLOGRAPHY (2.3 ANGSTROMS) OF 123-215</scope>
    <scope>SUBUNIT</scope>
</reference>
<proteinExistence type="evidence at protein level"/>
<sequence length="614" mass="66805">MTTLDSNNNTGGVITYIGSSGSSPSRTSPESLYSDNSNGSFQSLTQGCPTYFPPSPTGSLTQDPARSFGSIPPSLSDDGSPSSSSSSSSSSSSFYNGSPPGSLQVAMEDSSRVSPSKSTSNITKLNGMVLLCKVCGDVASGFHYGVHACEGCKGFFRRSIQQNIQYKRCLKNENCSIVRINRNRCQQCRFKKCLSVGMSRDAVRFGRIPKREKQRMLAEMQSAMNLANNQLSSQCPLETSPTQHPTPGPMGPSPPPAPVPSPLVGFSQFPQQLTPPRSPSPEPTVEDVISQVARAHREIFTYAHDKLGSSPGNFNANHASGSPPATTPHRWENQGCPPAPNDNNTLAAQRHNEALNGLRQAPSSYPPTWPPGPAHHSCHQSNSNGHRLCPTHVYAAPEGKAPANSPRQGNSKNVLLACPMNMYPHGRSGRTVQEIWEDFSMSFTPAVREVVEFAKHIPGFRDLSQHDQVTLLKAGTFEVLMVRFASLFNVKDQTVMFLSRTTYSLQELGAMGMGDLLSAMFDFSEKLNSLALTEEELGLFTAVVLVSADRSGMENSASVEQLQETLLRALRALVLKNRPLETSRFTKLLLKLPDLRTLNNMHSEKLLSFRVDAQ</sequence>
<name>NR1D1_HUMAN</name>
<organism>
    <name type="scientific">Homo sapiens</name>
    <name type="common">Human</name>
    <dbReference type="NCBI Taxonomy" id="9606"/>
    <lineage>
        <taxon>Eukaryota</taxon>
        <taxon>Metazoa</taxon>
        <taxon>Chordata</taxon>
        <taxon>Craniata</taxon>
        <taxon>Vertebrata</taxon>
        <taxon>Euteleostomi</taxon>
        <taxon>Mammalia</taxon>
        <taxon>Eutheria</taxon>
        <taxon>Euarchontoglires</taxon>
        <taxon>Primates</taxon>
        <taxon>Haplorrhini</taxon>
        <taxon>Catarrhini</taxon>
        <taxon>Hominidae</taxon>
        <taxon>Homo</taxon>
    </lineage>
</organism>
<gene>
    <name type="primary">NR1D1</name>
    <name type="synonym">EAR1</name>
    <name type="synonym">HREV</name>
    <name type="synonym">THRAL</name>
</gene>
<dbReference type="EMBL" id="M24898">
    <property type="protein sequence ID" value="AAA52335.1"/>
    <property type="molecule type" value="mRNA"/>
</dbReference>
<dbReference type="EMBL" id="M24900">
    <property type="protein sequence ID" value="AAA52332.1"/>
    <property type="molecule type" value="mRNA"/>
</dbReference>
<dbReference type="EMBL" id="X55066">
    <property type="status" value="NOT_ANNOTATED_CDS"/>
    <property type="molecule type" value="Genomic_DNA"/>
</dbReference>
<dbReference type="EMBL" id="X55067">
    <property type="status" value="NOT_ANNOTATED_CDS"/>
    <property type="molecule type" value="Genomic_DNA"/>
</dbReference>
<dbReference type="EMBL" id="X72631">
    <property type="protein sequence ID" value="CAB53540.1"/>
    <property type="molecule type" value="mRNA"/>
</dbReference>
<dbReference type="EMBL" id="BC047875">
    <property type="protein sequence ID" value="AAH47875.1"/>
    <property type="molecule type" value="mRNA"/>
</dbReference>
<dbReference type="EMBL" id="BC056148">
    <property type="protein sequence ID" value="AAH56148.1"/>
    <property type="molecule type" value="mRNA"/>
</dbReference>
<dbReference type="EMBL" id="M34339">
    <property type="protein sequence ID" value="AAA36561.1"/>
    <property type="molecule type" value="mRNA"/>
</dbReference>
<dbReference type="EMBL" id="M34340">
    <property type="protein sequence ID" value="AAA36562.2"/>
    <property type="molecule type" value="mRNA"/>
</dbReference>
<dbReference type="CCDS" id="CCDS11361.1"/>
<dbReference type="PIR" id="A32286">
    <property type="entry name" value="A32608"/>
</dbReference>
<dbReference type="RefSeq" id="NP_068370.1">
    <property type="nucleotide sequence ID" value="NM_021724.5"/>
</dbReference>
<dbReference type="PDB" id="1A6Y">
    <property type="method" value="X-ray"/>
    <property type="resolution" value="2.30 A"/>
    <property type="chains" value="A/B=123-216"/>
</dbReference>
<dbReference type="PDB" id="1GA5">
    <property type="method" value="X-ray"/>
    <property type="resolution" value="2.40 A"/>
    <property type="chains" value="A/B/E/F=123-216"/>
</dbReference>
<dbReference type="PDB" id="1HLZ">
    <property type="method" value="X-ray"/>
    <property type="resolution" value="2.80 A"/>
    <property type="chains" value="A/B=123-216"/>
</dbReference>
<dbReference type="PDB" id="3N00">
    <property type="method" value="X-ray"/>
    <property type="resolution" value="2.60 A"/>
    <property type="chains" value="A=281-614"/>
</dbReference>
<dbReference type="PDB" id="8D8I">
    <property type="method" value="X-ray"/>
    <property type="resolution" value="2.50 A"/>
    <property type="chains" value="A=281-614"/>
</dbReference>
<dbReference type="PDBsum" id="1A6Y"/>
<dbReference type="PDBsum" id="1GA5"/>
<dbReference type="PDBsum" id="1HLZ"/>
<dbReference type="PDBsum" id="3N00"/>
<dbReference type="PDBsum" id="8D8I"/>
<dbReference type="SMR" id="P20393"/>
<dbReference type="BioGRID" id="114941">
    <property type="interactions" value="23"/>
</dbReference>
<dbReference type="DIP" id="DIP-48396N"/>
<dbReference type="FunCoup" id="P20393">
    <property type="interactions" value="533"/>
</dbReference>
<dbReference type="IntAct" id="P20393">
    <property type="interactions" value="21"/>
</dbReference>
<dbReference type="MINT" id="P20393"/>
<dbReference type="STRING" id="9606.ENSP00000246672"/>
<dbReference type="BindingDB" id="P20393"/>
<dbReference type="ChEMBL" id="CHEMBL1961783"/>
<dbReference type="DrugBank" id="DB14013">
    <property type="generic name" value="SR-9009"/>
</dbReference>
<dbReference type="DrugBank" id="DB14014">
    <property type="generic name" value="SR-9011"/>
</dbReference>
<dbReference type="GuidetoPHARMACOLOGY" id="596"/>
<dbReference type="GlyGen" id="P20393">
    <property type="glycosylation" value="1 site"/>
</dbReference>
<dbReference type="iPTMnet" id="P20393"/>
<dbReference type="PhosphoSitePlus" id="P20393"/>
<dbReference type="BioMuta" id="NR1D1"/>
<dbReference type="DMDM" id="119100"/>
<dbReference type="jPOST" id="P20393"/>
<dbReference type="MassIVE" id="P20393"/>
<dbReference type="PaxDb" id="9606-ENSP00000246672"/>
<dbReference type="PeptideAtlas" id="P20393"/>
<dbReference type="ProteomicsDB" id="53759"/>
<dbReference type="Antibodypedia" id="16433">
    <property type="antibodies" value="494 antibodies from 36 providers"/>
</dbReference>
<dbReference type="DNASU" id="9572"/>
<dbReference type="Ensembl" id="ENST00000246672.4">
    <property type="protein sequence ID" value="ENSP00000246672.3"/>
    <property type="gene ID" value="ENSG00000126368.6"/>
</dbReference>
<dbReference type="GeneID" id="9572"/>
<dbReference type="KEGG" id="hsa:9572"/>
<dbReference type="MANE-Select" id="ENST00000246672.4">
    <property type="protein sequence ID" value="ENSP00000246672.3"/>
    <property type="RefSeq nucleotide sequence ID" value="NM_021724.5"/>
    <property type="RefSeq protein sequence ID" value="NP_068370.1"/>
</dbReference>
<dbReference type="UCSC" id="uc002htz.4">
    <property type="organism name" value="human"/>
</dbReference>
<dbReference type="AGR" id="HGNC:7962"/>
<dbReference type="CTD" id="9572"/>
<dbReference type="DisGeNET" id="9572"/>
<dbReference type="GeneCards" id="NR1D1"/>
<dbReference type="HGNC" id="HGNC:7962">
    <property type="gene designation" value="NR1D1"/>
</dbReference>
<dbReference type="HPA" id="ENSG00000126368">
    <property type="expression patterns" value="Tissue enhanced (skin)"/>
</dbReference>
<dbReference type="MalaCards" id="NR1D1"/>
<dbReference type="MIM" id="602408">
    <property type="type" value="gene"/>
</dbReference>
<dbReference type="neXtProt" id="NX_P20393"/>
<dbReference type="OpenTargets" id="ENSG00000126368"/>
<dbReference type="PharmGKB" id="PA31748"/>
<dbReference type="VEuPathDB" id="HostDB:ENSG00000126368"/>
<dbReference type="eggNOG" id="KOG4846">
    <property type="taxonomic scope" value="Eukaryota"/>
</dbReference>
<dbReference type="GeneTree" id="ENSGT00940000160548"/>
<dbReference type="HOGENOM" id="CLU_007368_2_4_1"/>
<dbReference type="InParanoid" id="P20393"/>
<dbReference type="OMA" id="LCPTHMY"/>
<dbReference type="OrthoDB" id="7634782at2759"/>
<dbReference type="PAN-GO" id="P20393">
    <property type="GO annotations" value="7 GO annotations based on evolutionary models"/>
</dbReference>
<dbReference type="PhylomeDB" id="P20393"/>
<dbReference type="TreeFam" id="TF328382"/>
<dbReference type="PathwayCommons" id="P20393"/>
<dbReference type="Reactome" id="R-HSA-1368071">
    <property type="pathway name" value="NR1D1 (REV-ERBA) represses gene expression"/>
</dbReference>
<dbReference type="Reactome" id="R-HSA-1989781">
    <property type="pathway name" value="PPARA activates gene expression"/>
</dbReference>
<dbReference type="Reactome" id="R-HSA-2151201">
    <property type="pathway name" value="Transcriptional activation of mitochondrial biogenesis"/>
</dbReference>
<dbReference type="Reactome" id="R-HSA-383280">
    <property type="pathway name" value="Nuclear Receptor transcription pathway"/>
</dbReference>
<dbReference type="Reactome" id="R-HSA-400253">
    <property type="pathway name" value="Circadian Clock"/>
</dbReference>
<dbReference type="Reactome" id="R-HSA-9707616">
    <property type="pathway name" value="Heme signaling"/>
</dbReference>
<dbReference type="SignaLink" id="P20393"/>
<dbReference type="SIGNOR" id="P20393"/>
<dbReference type="BioGRID-ORCS" id="9572">
    <property type="hits" value="16 hits in 1189 CRISPR screens"/>
</dbReference>
<dbReference type="ChiTaRS" id="NR1D1">
    <property type="organism name" value="human"/>
</dbReference>
<dbReference type="EvolutionaryTrace" id="P20393"/>
<dbReference type="GeneWiki" id="Rev-ErbA_alpha"/>
<dbReference type="GenomeRNAi" id="9572"/>
<dbReference type="Pharos" id="P20393">
    <property type="development level" value="Tchem"/>
</dbReference>
<dbReference type="PRO" id="PR:P20393"/>
<dbReference type="Proteomes" id="UP000005640">
    <property type="component" value="Chromosome 17"/>
</dbReference>
<dbReference type="RNAct" id="P20393">
    <property type="molecule type" value="protein"/>
</dbReference>
<dbReference type="Bgee" id="ENSG00000126368">
    <property type="expression patterns" value="Expressed in skin of leg and 207 other cell types or tissues"/>
</dbReference>
<dbReference type="ExpressionAtlas" id="P20393">
    <property type="expression patterns" value="baseline and differential"/>
</dbReference>
<dbReference type="GO" id="GO:0000785">
    <property type="term" value="C:chromatin"/>
    <property type="evidence" value="ECO:0000314"/>
    <property type="project" value="BHF-UCL"/>
</dbReference>
<dbReference type="GO" id="GO:0005737">
    <property type="term" value="C:cytoplasm"/>
    <property type="evidence" value="ECO:0000250"/>
    <property type="project" value="UniProtKB"/>
</dbReference>
<dbReference type="GO" id="GO:0030425">
    <property type="term" value="C:dendrite"/>
    <property type="evidence" value="ECO:0000250"/>
    <property type="project" value="UniProtKB"/>
</dbReference>
<dbReference type="GO" id="GO:0043197">
    <property type="term" value="C:dendritic spine"/>
    <property type="evidence" value="ECO:0000250"/>
    <property type="project" value="UniProtKB"/>
</dbReference>
<dbReference type="GO" id="GO:0016604">
    <property type="term" value="C:nuclear body"/>
    <property type="evidence" value="ECO:0000314"/>
    <property type="project" value="HPA"/>
</dbReference>
<dbReference type="GO" id="GO:0005654">
    <property type="term" value="C:nucleoplasm"/>
    <property type="evidence" value="ECO:0000304"/>
    <property type="project" value="Reactome"/>
</dbReference>
<dbReference type="GO" id="GO:0005634">
    <property type="term" value="C:nucleus"/>
    <property type="evidence" value="ECO:0000250"/>
    <property type="project" value="UniProtKB"/>
</dbReference>
<dbReference type="GO" id="GO:0000981">
    <property type="term" value="F:DNA-binding transcription factor activity, RNA polymerase II-specific"/>
    <property type="evidence" value="ECO:0000247"/>
    <property type="project" value="NTNU_SB"/>
</dbReference>
<dbReference type="GO" id="GO:0001227">
    <property type="term" value="F:DNA-binding transcription repressor activity, RNA polymerase II-specific"/>
    <property type="evidence" value="ECO:0000314"/>
    <property type="project" value="NTNU_SB"/>
</dbReference>
<dbReference type="GO" id="GO:0070888">
    <property type="term" value="F:E-box binding"/>
    <property type="evidence" value="ECO:0007669"/>
    <property type="project" value="Ensembl"/>
</dbReference>
<dbReference type="GO" id="GO:0020037">
    <property type="term" value="F:heme binding"/>
    <property type="evidence" value="ECO:0000314"/>
    <property type="project" value="UniProtKB"/>
</dbReference>
<dbReference type="GO" id="GO:0004879">
    <property type="term" value="F:nuclear receptor activity"/>
    <property type="evidence" value="ECO:0000318"/>
    <property type="project" value="GO_Central"/>
</dbReference>
<dbReference type="GO" id="GO:0003707">
    <property type="term" value="F:nuclear steroid receptor activity"/>
    <property type="evidence" value="ECO:0000304"/>
    <property type="project" value="ProtInc"/>
</dbReference>
<dbReference type="GO" id="GO:0000978">
    <property type="term" value="F:RNA polymerase II cis-regulatory region sequence-specific DNA binding"/>
    <property type="evidence" value="ECO:0000314"/>
    <property type="project" value="UniProtKB"/>
</dbReference>
<dbReference type="GO" id="GO:0000977">
    <property type="term" value="F:RNA polymerase II transcription regulatory region sequence-specific DNA binding"/>
    <property type="evidence" value="ECO:0000314"/>
    <property type="project" value="MGI"/>
</dbReference>
<dbReference type="GO" id="GO:1990837">
    <property type="term" value="F:sequence-specific double-stranded DNA binding"/>
    <property type="evidence" value="ECO:0000314"/>
    <property type="project" value="ARUK-UCL"/>
</dbReference>
<dbReference type="GO" id="GO:0000976">
    <property type="term" value="F:transcription cis-regulatory region binding"/>
    <property type="evidence" value="ECO:0000314"/>
    <property type="project" value="BHF-UCL"/>
</dbReference>
<dbReference type="GO" id="GO:0001222">
    <property type="term" value="F:transcription corepressor binding"/>
    <property type="evidence" value="ECO:0000314"/>
    <property type="project" value="UniProtKB"/>
</dbReference>
<dbReference type="GO" id="GO:0008270">
    <property type="term" value="F:zinc ion binding"/>
    <property type="evidence" value="ECO:0007669"/>
    <property type="project" value="UniProtKB-KW"/>
</dbReference>
<dbReference type="GO" id="GO:0030154">
    <property type="term" value="P:cell differentiation"/>
    <property type="evidence" value="ECO:0000318"/>
    <property type="project" value="GO_Central"/>
</dbReference>
<dbReference type="GO" id="GO:0071347">
    <property type="term" value="P:cellular response to interleukin-1"/>
    <property type="evidence" value="ECO:0000250"/>
    <property type="project" value="UniProtKB"/>
</dbReference>
<dbReference type="GO" id="GO:0071222">
    <property type="term" value="P:cellular response to lipopolysaccharide"/>
    <property type="evidence" value="ECO:0000315"/>
    <property type="project" value="BHF-UCL"/>
</dbReference>
<dbReference type="GO" id="GO:0071356">
    <property type="term" value="P:cellular response to tumor necrosis factor"/>
    <property type="evidence" value="ECO:0000250"/>
    <property type="project" value="UniProtKB"/>
</dbReference>
<dbReference type="GO" id="GO:0042632">
    <property type="term" value="P:cholesterol homeostasis"/>
    <property type="evidence" value="ECO:0000250"/>
    <property type="project" value="UniProtKB"/>
</dbReference>
<dbReference type="GO" id="GO:0032922">
    <property type="term" value="P:circadian regulation of gene expression"/>
    <property type="evidence" value="ECO:0000250"/>
    <property type="project" value="UniProtKB"/>
</dbReference>
<dbReference type="GO" id="GO:0060086">
    <property type="term" value="P:circadian temperature homeostasis"/>
    <property type="evidence" value="ECO:0000250"/>
    <property type="project" value="UniProtKB"/>
</dbReference>
<dbReference type="GO" id="GO:0005978">
    <property type="term" value="P:glycogen biosynthetic process"/>
    <property type="evidence" value="ECO:0000250"/>
    <property type="project" value="UniProtKB"/>
</dbReference>
<dbReference type="GO" id="GO:0009755">
    <property type="term" value="P:hormone-mediated signaling pathway"/>
    <property type="evidence" value="ECO:0000318"/>
    <property type="project" value="GO_Central"/>
</dbReference>
<dbReference type="GO" id="GO:0001678">
    <property type="term" value="P:intracellular glucose homeostasis"/>
    <property type="evidence" value="ECO:0000315"/>
    <property type="project" value="UniProtKB"/>
</dbReference>
<dbReference type="GO" id="GO:0030522">
    <property type="term" value="P:intracellular receptor signaling pathway"/>
    <property type="evidence" value="ECO:0000318"/>
    <property type="project" value="GO_Central"/>
</dbReference>
<dbReference type="GO" id="GO:0061889">
    <property type="term" value="P:negative regulation of astrocyte activation"/>
    <property type="evidence" value="ECO:0000250"/>
    <property type="project" value="UniProtKB"/>
</dbReference>
<dbReference type="GO" id="GO:0043124">
    <property type="term" value="P:negative regulation of canonical NF-kappaB signal transduction"/>
    <property type="evidence" value="ECO:0000250"/>
    <property type="project" value="UniProtKB"/>
</dbReference>
<dbReference type="GO" id="GO:0120163">
    <property type="term" value="P:negative regulation of cold-induced thermogenesis"/>
    <property type="evidence" value="ECO:0000250"/>
    <property type="project" value="YuBioLab"/>
</dbReference>
<dbReference type="GO" id="GO:0045892">
    <property type="term" value="P:negative regulation of DNA-templated transcription"/>
    <property type="evidence" value="ECO:0000314"/>
    <property type="project" value="UniProtKB"/>
</dbReference>
<dbReference type="GO" id="GO:0050728">
    <property type="term" value="P:negative regulation of inflammatory response"/>
    <property type="evidence" value="ECO:0000250"/>
    <property type="project" value="UniProtKB"/>
</dbReference>
<dbReference type="GO" id="GO:1903979">
    <property type="term" value="P:negative regulation of microglial cell activation"/>
    <property type="evidence" value="ECO:0000250"/>
    <property type="project" value="UniProtKB"/>
</dbReference>
<dbReference type="GO" id="GO:0150079">
    <property type="term" value="P:negative regulation of neuroinflammatory response"/>
    <property type="evidence" value="ECO:0000250"/>
    <property type="project" value="UniProtKB"/>
</dbReference>
<dbReference type="GO" id="GO:0034144">
    <property type="term" value="P:negative regulation of toll-like receptor 4 signaling pathway"/>
    <property type="evidence" value="ECO:0000315"/>
    <property type="project" value="BHF-UCL"/>
</dbReference>
<dbReference type="GO" id="GO:0000122">
    <property type="term" value="P:negative regulation of transcription by RNA polymerase II"/>
    <property type="evidence" value="ECO:0000314"/>
    <property type="project" value="MGI"/>
</dbReference>
<dbReference type="GO" id="GO:0070859">
    <property type="term" value="P:positive regulation of bile acid biosynthetic process"/>
    <property type="evidence" value="ECO:0000250"/>
    <property type="project" value="UniProtKB"/>
</dbReference>
<dbReference type="GO" id="GO:0045893">
    <property type="term" value="P:positive regulation of DNA-templated transcription"/>
    <property type="evidence" value="ECO:0000250"/>
    <property type="project" value="UniProtKB"/>
</dbReference>
<dbReference type="GO" id="GO:0045944">
    <property type="term" value="P:positive regulation of transcription by RNA polymerase II"/>
    <property type="evidence" value="ECO:0000318"/>
    <property type="project" value="GO_Central"/>
</dbReference>
<dbReference type="GO" id="GO:0010498">
    <property type="term" value="P:proteasomal protein catabolic process"/>
    <property type="evidence" value="ECO:0000250"/>
    <property type="project" value="UniProtKB"/>
</dbReference>
<dbReference type="GO" id="GO:0031648">
    <property type="term" value="P:protein destabilization"/>
    <property type="evidence" value="ECO:0000250"/>
    <property type="project" value="UniProtKB"/>
</dbReference>
<dbReference type="GO" id="GO:0042752">
    <property type="term" value="P:regulation of circadian rhythm"/>
    <property type="evidence" value="ECO:0000250"/>
    <property type="project" value="UniProtKB"/>
</dbReference>
<dbReference type="GO" id="GO:0042749">
    <property type="term" value="P:regulation of circadian sleep/wake cycle"/>
    <property type="evidence" value="ECO:0000250"/>
    <property type="project" value="UniProtKB"/>
</dbReference>
<dbReference type="GO" id="GO:0045598">
    <property type="term" value="P:regulation of fat cell differentiation"/>
    <property type="evidence" value="ECO:0000250"/>
    <property type="project" value="UniProtKB"/>
</dbReference>
<dbReference type="GO" id="GO:0061178">
    <property type="term" value="P:regulation of insulin secretion involved in cellular response to glucose stimulus"/>
    <property type="evidence" value="ECO:0000250"/>
    <property type="project" value="UniProtKB"/>
</dbReference>
<dbReference type="GO" id="GO:0019216">
    <property type="term" value="P:regulation of lipid metabolic process"/>
    <property type="evidence" value="ECO:0000250"/>
    <property type="project" value="UniProtKB"/>
</dbReference>
<dbReference type="GO" id="GO:0061469">
    <property type="term" value="P:regulation of type B pancreatic cell proliferation"/>
    <property type="evidence" value="ECO:0000250"/>
    <property type="project" value="UniProtKB"/>
</dbReference>
<dbReference type="GO" id="GO:0044321">
    <property type="term" value="P:response to leptin"/>
    <property type="evidence" value="ECO:0000250"/>
    <property type="project" value="UniProtKB"/>
</dbReference>
<dbReference type="CDD" id="cd07166">
    <property type="entry name" value="NR_DBD_REV_ERB"/>
    <property type="match status" value="1"/>
</dbReference>
<dbReference type="FunFam" id="3.30.50.10:FF:000013">
    <property type="entry name" value="Nuclear receptor subfamily 1 group D member 2"/>
    <property type="match status" value="1"/>
</dbReference>
<dbReference type="Gene3D" id="3.30.50.10">
    <property type="entry name" value="Erythroid Transcription Factor GATA-1, subunit A"/>
    <property type="match status" value="1"/>
</dbReference>
<dbReference type="Gene3D" id="1.10.565.10">
    <property type="entry name" value="Retinoid X Receptor"/>
    <property type="match status" value="1"/>
</dbReference>
<dbReference type="IDEAL" id="IID00033"/>
<dbReference type="InterPro" id="IPR035500">
    <property type="entry name" value="NHR-like_dom_sf"/>
</dbReference>
<dbReference type="InterPro" id="IPR000536">
    <property type="entry name" value="Nucl_hrmn_rcpt_lig-bd"/>
</dbReference>
<dbReference type="InterPro" id="IPR050234">
    <property type="entry name" value="Nuclear_hormone_rcpt_NR1"/>
</dbReference>
<dbReference type="InterPro" id="IPR001723">
    <property type="entry name" value="Nuclear_hrmn_rcpt"/>
</dbReference>
<dbReference type="InterPro" id="IPR001628">
    <property type="entry name" value="Znf_hrmn_rcpt"/>
</dbReference>
<dbReference type="InterPro" id="IPR013088">
    <property type="entry name" value="Znf_NHR/GATA"/>
</dbReference>
<dbReference type="PANTHER" id="PTHR24082">
    <property type="entry name" value="NUCLEAR HORMONE RECEPTOR"/>
    <property type="match status" value="1"/>
</dbReference>
<dbReference type="PANTHER" id="PTHR24082:SF113">
    <property type="entry name" value="NUCLEAR RECEPTOR SUBFAMILY 1 GROUP D MEMBER 1"/>
    <property type="match status" value="1"/>
</dbReference>
<dbReference type="Pfam" id="PF00104">
    <property type="entry name" value="Hormone_recep"/>
    <property type="match status" value="1"/>
</dbReference>
<dbReference type="Pfam" id="PF00105">
    <property type="entry name" value="zf-C4"/>
    <property type="match status" value="1"/>
</dbReference>
<dbReference type="PRINTS" id="PR00398">
    <property type="entry name" value="STRDHORMONER"/>
</dbReference>
<dbReference type="PRINTS" id="PR00047">
    <property type="entry name" value="STROIDFINGER"/>
</dbReference>
<dbReference type="SMART" id="SM00430">
    <property type="entry name" value="HOLI"/>
    <property type="match status" value="1"/>
</dbReference>
<dbReference type="SMART" id="SM00399">
    <property type="entry name" value="ZnF_C4"/>
    <property type="match status" value="1"/>
</dbReference>
<dbReference type="SUPFAM" id="SSF57716">
    <property type="entry name" value="Glucocorticoid receptor-like (DNA-binding domain)"/>
    <property type="match status" value="1"/>
</dbReference>
<dbReference type="SUPFAM" id="SSF48508">
    <property type="entry name" value="Nuclear receptor ligand-binding domain"/>
    <property type="match status" value="1"/>
</dbReference>
<dbReference type="PROSITE" id="PS51843">
    <property type="entry name" value="NR_LBD"/>
    <property type="match status" value="1"/>
</dbReference>
<dbReference type="PROSITE" id="PS00031">
    <property type="entry name" value="NUCLEAR_REC_DBD_1"/>
    <property type="match status" value="1"/>
</dbReference>
<dbReference type="PROSITE" id="PS51030">
    <property type="entry name" value="NUCLEAR_REC_DBD_2"/>
    <property type="match status" value="1"/>
</dbReference>
<feature type="chain" id="PRO_0000053499" description="Nuclear receptor subfamily 1 group D member 1">
    <location>
        <begin position="1"/>
        <end position="614"/>
    </location>
</feature>
<feature type="domain" description="NR LBD" evidence="4">
    <location>
        <begin position="284"/>
        <end position="614"/>
    </location>
</feature>
<feature type="DNA-binding region" description="Nuclear receptor" evidence="3">
    <location>
        <begin position="129"/>
        <end position="205"/>
    </location>
</feature>
<feature type="zinc finger region" description="NR C4-type" evidence="3">
    <location>
        <begin position="132"/>
        <end position="152"/>
    </location>
</feature>
<feature type="zinc finger region" description="NR C4-type" evidence="3">
    <location>
        <begin position="169"/>
        <end position="193"/>
    </location>
</feature>
<feature type="region of interest" description="Modulating">
    <location>
        <begin position="1"/>
        <end position="128"/>
    </location>
</feature>
<feature type="region of interest" description="Disordered" evidence="5">
    <location>
        <begin position="1"/>
        <end position="119"/>
    </location>
</feature>
<feature type="region of interest" description="Required for phosphorylation by CSNK1E and cytoplasmic localization" evidence="2">
    <location>
        <begin position="1"/>
        <end position="70"/>
    </location>
</feature>
<feature type="region of interest" description="Crucial for activation of GJA1" evidence="1">
    <location>
        <begin position="49"/>
        <end position="284"/>
    </location>
</feature>
<feature type="region of interest" description="Disordered" evidence="5">
    <location>
        <begin position="233"/>
        <end position="285"/>
    </location>
</feature>
<feature type="region of interest" description="Disordered" evidence="5">
    <location>
        <begin position="311"/>
        <end position="345"/>
    </location>
</feature>
<feature type="compositionally biased region" description="Polar residues" evidence="5">
    <location>
        <begin position="1"/>
        <end position="12"/>
    </location>
</feature>
<feature type="compositionally biased region" description="Low complexity" evidence="5">
    <location>
        <begin position="14"/>
        <end position="34"/>
    </location>
</feature>
<feature type="compositionally biased region" description="Polar residues" evidence="5">
    <location>
        <begin position="35"/>
        <end position="48"/>
    </location>
</feature>
<feature type="compositionally biased region" description="Low complexity" evidence="5">
    <location>
        <begin position="69"/>
        <end position="102"/>
    </location>
</feature>
<feature type="compositionally biased region" description="Polar residues" evidence="5">
    <location>
        <begin position="233"/>
        <end position="243"/>
    </location>
</feature>
<feature type="compositionally biased region" description="Pro residues" evidence="5">
    <location>
        <begin position="244"/>
        <end position="261"/>
    </location>
</feature>
<feature type="compositionally biased region" description="Polar residues" evidence="5">
    <location>
        <begin position="311"/>
        <end position="324"/>
    </location>
</feature>
<feature type="binding site" evidence="1">
    <location>
        <position position="418"/>
    </location>
    <ligand>
        <name>heme</name>
        <dbReference type="ChEBI" id="CHEBI:30413"/>
    </ligand>
</feature>
<feature type="binding site">
    <location>
        <position position="602"/>
    </location>
    <ligand>
        <name>heme</name>
        <dbReference type="ChEBI" id="CHEBI:30413"/>
    </ligand>
</feature>
<feature type="modified residue" description="Phosphoserine; by GSK3-beta" evidence="8 19">
    <location>
        <position position="55"/>
    </location>
</feature>
<feature type="modified residue" description="Phosphoserine; by GSK3-beta" evidence="8 19">
    <location>
        <position position="59"/>
    </location>
</feature>
<feature type="modified residue" description="N6-acetyllysine; by KAT5" evidence="1">
    <location>
        <position position="191"/>
    </location>
</feature>
<feature type="modified residue" description="N6-acetyllysine; by KAT5" evidence="1">
    <location>
        <position position="192"/>
    </location>
</feature>
<feature type="modified residue" description="Phosphothreonine; by CDK1" evidence="2">
    <location>
        <position position="274"/>
    </location>
</feature>
<feature type="modified residue" description="N6-acetyllysine" evidence="20">
    <location>
        <position position="400"/>
    </location>
</feature>
<feature type="modified residue" description="N6-acetyllysine" evidence="20">
    <location>
        <position position="591"/>
    </location>
</feature>
<feature type="sequence conflict" description="In Ref. 2; CAB53540." evidence="25" ref="2">
    <original>H</original>
    <variation>L</variation>
    <location>
        <position position="147"/>
    </location>
</feature>
<feature type="sequence conflict" description="In Ref. 2." evidence="25" ref="2">
    <original>E</original>
    <variation>Q</variation>
    <location>
        <position position="564"/>
    </location>
</feature>
<feature type="turn" evidence="26">
    <location>
        <begin position="133"/>
        <end position="135"/>
    </location>
</feature>
<feature type="strand" evidence="26">
    <location>
        <begin position="136"/>
        <end position="138"/>
    </location>
</feature>
<feature type="strand" evidence="26">
    <location>
        <begin position="141"/>
        <end position="143"/>
    </location>
</feature>
<feature type="strand" evidence="26">
    <location>
        <begin position="146"/>
        <end position="148"/>
    </location>
</feature>
<feature type="helix" evidence="26">
    <location>
        <begin position="150"/>
        <end position="160"/>
    </location>
</feature>
<feature type="strand" evidence="27">
    <location>
        <begin position="170"/>
        <end position="173"/>
    </location>
</feature>
<feature type="turn" evidence="26">
    <location>
        <begin position="179"/>
        <end position="183"/>
    </location>
</feature>
<feature type="helix" evidence="26">
    <location>
        <begin position="186"/>
        <end position="193"/>
    </location>
</feature>
<feature type="turn" evidence="26">
    <location>
        <begin position="194"/>
        <end position="197"/>
    </location>
</feature>
<feature type="helix" evidence="27">
    <location>
        <begin position="200"/>
        <end position="202"/>
    </location>
</feature>
<feature type="helix" evidence="28">
    <location>
        <begin position="285"/>
        <end position="299"/>
    </location>
</feature>
<feature type="helix" evidence="28">
    <location>
        <begin position="432"/>
        <end position="455"/>
    </location>
</feature>
<feature type="turn" evidence="28">
    <location>
        <begin position="458"/>
        <end position="462"/>
    </location>
</feature>
<feature type="helix" evidence="28">
    <location>
        <begin position="465"/>
        <end position="484"/>
    </location>
</feature>
<feature type="helix" evidence="28">
    <location>
        <begin position="485"/>
        <end position="487"/>
    </location>
</feature>
<feature type="turn" evidence="28">
    <location>
        <begin position="490"/>
        <end position="493"/>
    </location>
</feature>
<feature type="strand" evidence="28">
    <location>
        <begin position="494"/>
        <end position="496"/>
    </location>
</feature>
<feature type="strand" evidence="28">
    <location>
        <begin position="502"/>
        <end position="504"/>
    </location>
</feature>
<feature type="helix" evidence="28">
    <location>
        <begin position="507"/>
        <end position="510"/>
    </location>
</feature>
<feature type="helix" evidence="28">
    <location>
        <begin position="515"/>
        <end position="528"/>
    </location>
</feature>
<feature type="helix" evidence="28">
    <location>
        <begin position="534"/>
        <end position="546"/>
    </location>
</feature>
<feature type="helix" evidence="28">
    <location>
        <begin position="556"/>
        <end position="577"/>
    </location>
</feature>
<feature type="helix" evidence="28">
    <location>
        <begin position="584"/>
        <end position="589"/>
    </location>
</feature>
<feature type="helix" evidence="28">
    <location>
        <begin position="591"/>
        <end position="602"/>
    </location>
</feature>
<feature type="strand" evidence="28">
    <location>
        <begin position="606"/>
        <end position="610"/>
    </location>
</feature>
<accession>P20393</accession>
<accession>Q0P5Z4</accession>
<accession>Q15304</accession>
<protein>
    <recommendedName>
        <fullName>Nuclear receptor subfamily 1 group D member 1</fullName>
    </recommendedName>
    <alternativeName>
        <fullName>Rev-erbA-alpha</fullName>
    </alternativeName>
    <alternativeName>
        <fullName>V-erbA-related protein 1</fullName>
        <shortName>EAR-1</shortName>
    </alternativeName>
</protein>
<keyword id="KW-0002">3D-structure</keyword>
<keyword id="KW-0007">Acetylation</keyword>
<keyword id="KW-0010">Activator</keyword>
<keyword id="KW-0090">Biological rhythms</keyword>
<keyword id="KW-0966">Cell projection</keyword>
<keyword id="KW-0963">Cytoplasm</keyword>
<keyword id="KW-0221">Differentiation</keyword>
<keyword id="KW-0238">DNA-binding</keyword>
<keyword id="KW-0349">Heme</keyword>
<keyword id="KW-0408">Iron</keyword>
<keyword id="KW-0479">Metal-binding</keyword>
<keyword id="KW-0539">Nucleus</keyword>
<keyword id="KW-0597">Phosphoprotein</keyword>
<keyword id="KW-1267">Proteomics identification</keyword>
<keyword id="KW-0675">Receptor</keyword>
<keyword id="KW-1185">Reference proteome</keyword>
<keyword id="KW-0678">Repressor</keyword>
<keyword id="KW-0770">Synapse</keyword>
<keyword id="KW-0804">Transcription</keyword>
<keyword id="KW-0805">Transcription regulation</keyword>
<keyword id="KW-0832">Ubl conjugation</keyword>
<keyword id="KW-0862">Zinc</keyword>
<keyword id="KW-0863">Zinc-finger</keyword>
<comment type="function">
    <text evidence="2 6 7 9 11 12 13 15 18 19 21">Transcriptional repressor which coordinates circadian rhythm and metabolic pathways in a heme-dependent manner. Integral component of the complex transcription machinery that governs circadian rhythmicity and forms a critical negative limb of the circadian clock by directly repressing the expression of core clock components BMAL1, CLOCK and CRY1. Also regulates genes involved in metabolic functions, including lipid and bile acid metabolism, adipogenesis, gluconeogenesis and the macrophage inflammatory response. Acts as a receptor for heme which stimulates its interaction with the NCOR1/HDAC3 corepressor complex, enhancing transcriptional repression. Recognizes two classes of DNA response elements within the promoter of its target genes and can bind to DNA as either monomers or homodimers, depending on the nature of the response element. Binds as a monomer to a response element composed of the consensus half-site motif 5'-[A/G]GGTCA-3' preceded by an A/T-rich 5' sequence (RevRE), or as a homodimer to a direct repeat of the core motif spaced by two nucleotides (RevDR-2). Acts as a potent competitive repressor of ROR alpha (RORA) function and regulates the levels of its ligand heme by repressing the expression of PPARGC1A, a potent inducer of heme synthesis. Regulates lipid metabolism by repressing the expression of APOC3 and by influencing the activity of sterol response element binding proteins (SREBPs); represses INSIG2 which interferes with the proteolytic activation of SREBPs which in turn govern the rhythmic expression of enzymes with key functions in sterol and fatty acid synthesis. Regulates gluconeogenesis via repression of G6PC1 and PEPCK and adipocyte differentiation via repression of PPARG. Regulates glucagon release in pancreatic alpha-cells via the AMPK-NAMPT-SIRT1 pathway and the proliferation, glucose-induced insulin secretion and expression of key lipogenic genes in pancreatic-beta cells. Positively regulates bile acid synthesis by increasing hepatic expression of CYP7A1 via repression of NR0B2 and NFIL3 which are negative regulators of CYP7A1. Modulates skeletal muscle oxidative capacity by regulating mitochondrial biogenesis and autophagy; controls mitochondrial biogenesis and respiration by interfering with the STK11-PRKAA1/2-SIRT1-PPARGC1A signaling pathway. Represses the expression of SERPINE1/PAI1, an important modulator of cardiovascular disease and the expression of inflammatory cytokines and chemokines in macrophages. Represses gene expression at a distance in macrophages by inhibiting the transcription of enhancer-derived RNAs (eRNAs). Plays a role in the circadian regulation of body temperature and negatively regulates thermogenic transcriptional programs in brown adipose tissue (BAT); imposes a circadian oscillation in BAT activity, increasing body temperature when awake and depressing thermogenesis during sleep. In concert with NR2E3, regulates transcriptional networks critical for photoreceptor development and function. In addition to its activity as a repressor, can also act as a transcriptional activator. In the ovarian granulosa cells acts as a transcriptional activator of STAR which plays a role in steroid biosynthesis. In collaboration with SP1, activates GJA1 transcription in a heme-independent manner. Represses the transcription of CYP2B10, CYP4A10 and CYP4A14 (By similarity). Represses the transcription of CES2 (By similarity). Represses and regulates the circadian expression of TSHB in a NCOR1-dependent manner (By similarity). Negatively regulates the protein stability of NR3C1 and influences the time-dependent subcellular distribution of NR3C1, thereby affecting its transcriptional regulatory activity (By similarity). Plays a critical role in the circadian control of neutrophilic inflammation in the lung; under resting, non-stress conditions, acts as a rhythmic repressor to limit inflammatory activity whereas in the presence of inflammatory triggers undergoes ubiquitin-mediated degradation thereby relieving inhibition of the inflammatory response (By similarity). Plays a key role in the circadian regulation of microglial activation and neuroinflammation; suppresses microglial activation through the NF-kappaB pathway in the central nervous system (By similarity). Plays a role in the regulation of the diurnal rhythms of lipid and protein metabolism in the skeletal muscle via transcriptional repression of genes controlling lipid and amino acid metabolism in the muscle (By similarity).</text>
</comment>
<comment type="subunit">
    <text evidence="2 10 14 16 17 19 22 23 24">Binds DNA as a monomer or a homodimer (PubMed:9660968). Interacts with C1D, NR2E3 and SP1 (By similarity). Interacts with OPHN1 (via C-terminus) (PubMed:21874017). Interacts with ZNHIT1 (PubMed:17892483). Interacts with PER2; the interaction associates PER2 to BMAL1 promoter region (PubMed:22170608). Interacts with CRY1 (PubMed:22170608). Interacts with CCAR2 (PubMed:23398316). Interacts with SIAH2 (PubMed:26392558). Interacts with CDK1 (By similarity). Interacts with FBXW7 (PubMed:27238018). Interacts with HUWE1 (PubMed:20534529). Interacts with NR0B2 (By similarity). Interacts with NFIL3 (By similarity). Interacts (via domain NR LBD) with HSP90AA1 and HSP90AB1 (By similarity).</text>
</comment>
<comment type="interaction">
    <interactant intactId="EBI-2811738">
        <id>P20393</id>
    </interactant>
    <interactant intactId="EBI-1222447">
        <id>P06727</id>
        <label>APOA4</label>
    </interactant>
    <organismsDiffer>false</organismsDiffer>
    <experiments>3</experiments>
</comment>
<comment type="interaction">
    <interactant intactId="EBI-2811738">
        <id>P20393</id>
    </interactant>
    <interactant intactId="EBI-625934">
        <id>Q7Z6Z7</id>
        <label>HUWE1</label>
    </interactant>
    <organismsDiffer>false</organismsDiffer>
    <experiments>3</experiments>
</comment>
<comment type="interaction">
    <interactant intactId="EBI-2811738">
        <id>P20393</id>
    </interactant>
    <interactant intactId="EBI-16430606">
        <id>A0A0S2Z3X1</id>
        <label>INPP1</label>
    </interactant>
    <organismsDiffer>false</organismsDiffer>
    <experiments>3</experiments>
</comment>
<comment type="interaction">
    <interactant intactId="EBI-2811738">
        <id>P20393</id>
    </interactant>
    <interactant intactId="EBI-347233">
        <id>O75376</id>
        <label>NCOR1</label>
    </interactant>
    <organismsDiffer>false</organismsDiffer>
    <experiments>3</experiments>
</comment>
<comment type="interaction">
    <interactant intactId="EBI-2811738">
        <id>P20393</id>
    </interactant>
    <interactant intactId="EBI-742688">
        <id>Q9NZD8</id>
        <label>SPG21</label>
    </interactant>
    <organismsDiffer>false</organismsDiffer>
    <experiments>3</experiments>
</comment>
<comment type="interaction">
    <interactant intactId="EBI-2811738">
        <id>P20393</id>
    </interactant>
    <interactant intactId="EBI-743494">
        <id>P48775</id>
        <label>TDO2</label>
    </interactant>
    <organismsDiffer>false</organismsDiffer>
    <experiments>3</experiments>
</comment>
<comment type="interaction">
    <interactant intactId="EBI-2811738">
        <id>P20393</id>
    </interactant>
    <interactant intactId="EBI-1266779">
        <id>O54943</id>
        <label>Per2</label>
    </interactant>
    <organismsDiffer>true</organismsDiffer>
    <experiments>2</experiments>
</comment>
<comment type="subcellular location">
    <subcellularLocation>
        <location evidence="2">Nucleus</location>
    </subcellularLocation>
    <subcellularLocation>
        <location evidence="2">Cytoplasm</location>
    </subcellularLocation>
    <subcellularLocation>
        <location evidence="2">Cell projection</location>
        <location evidence="2">Dendrite</location>
    </subcellularLocation>
    <subcellularLocation>
        <location evidence="2">Cell projection</location>
        <location evidence="2">Dendritic spine</location>
    </subcellularLocation>
    <text evidence="2">Localizes to the cytoplasm, dendrites and dendritic spine in the presence of OPHN1. Localizes predominantly to the nucleus at ZT8 whereas it is cytoplasmic at ZT20. Phosphorylation by CSNK1E enhances its cytoplasmic localization.</text>
</comment>
<comment type="tissue specificity">
    <text evidence="21">Widely expressed. Expressed at high levels in the liver, adipose tissue, skeletal muscle and brain. Also expressed in endothelial cells (ECs), vascular smooth muscle cells (VSMCs) and macrophages. Expression oscillates diurnally in the suprachiasmatic nucleus (SCN) of the hypothalamus as well as in peripheral tissues. Expression increases during the differentiation of pre-adipocytes into mature adipocytes. Expressed at high levels in some squamous carcinoma cell lines.</text>
</comment>
<comment type="domain">
    <text>Composed of three domains: a modulating N-terminal domain, a DNA-binding domain and a C-terminal ligand-binding domain.</text>
</comment>
<comment type="PTM">
    <text evidence="2 8 14 19 22">Ubiquitinated, leading to its proteasomal degradation (PubMed:16484495, PubMed:20534529, PubMed:23398316). Ubiquitinated by SIAH2; leading to its proteasomal degradation (PubMed:26392558). Ubiquitinated by the SCF(FBXW7) complex when phosphorylated by CDK1 leading to its proteasomal degradation (By similarity). Rapidly ubiquitinated in response to inflammatory triggers and sumoylation is a prerequisite to its ubiquitination (By similarity).</text>
</comment>
<comment type="PTM">
    <text evidence="2">Sumoylated by UBE2I, desumoylated by SENP1, and sumoylation is a prerequisite to its ubiquitination.</text>
</comment>
<comment type="PTM">
    <text evidence="2">Phosphorylated by CSNK1E; phosphorylation enhances its cytoplasmic localization.</text>
</comment>
<comment type="PTM">
    <text evidence="2">Undergoes lysosome-mediated degradation in a time-dependent manner in the liver.</text>
</comment>
<comment type="similarity">
    <text evidence="25">Belongs to the nuclear hormone receptor family. NR1 subfamily.</text>
</comment>
<evidence type="ECO:0000250" key="1"/>
<evidence type="ECO:0000250" key="2">
    <source>
        <dbReference type="UniProtKB" id="Q3UV55"/>
    </source>
</evidence>
<evidence type="ECO:0000255" key="3">
    <source>
        <dbReference type="PROSITE-ProRule" id="PRU00407"/>
    </source>
</evidence>
<evidence type="ECO:0000255" key="4">
    <source>
        <dbReference type="PROSITE-ProRule" id="PRU01189"/>
    </source>
</evidence>
<evidence type="ECO:0000256" key="5">
    <source>
        <dbReference type="SAM" id="MobiDB-lite"/>
    </source>
</evidence>
<evidence type="ECO:0000269" key="6">
    <source>
    </source>
</evidence>
<evidence type="ECO:0000269" key="7">
    <source>
    </source>
</evidence>
<evidence type="ECO:0000269" key="8">
    <source>
    </source>
</evidence>
<evidence type="ECO:0000269" key="9">
    <source>
    </source>
</evidence>
<evidence type="ECO:0000269" key="10">
    <source>
    </source>
</evidence>
<evidence type="ECO:0000269" key="11">
    <source>
    </source>
</evidence>
<evidence type="ECO:0000269" key="12">
    <source>
    </source>
</evidence>
<evidence type="ECO:0000269" key="13">
    <source>
    </source>
</evidence>
<evidence type="ECO:0000269" key="14">
    <source>
    </source>
</evidence>
<evidence type="ECO:0000269" key="15">
    <source>
    </source>
</evidence>
<evidence type="ECO:0000269" key="16">
    <source>
    </source>
</evidence>
<evidence type="ECO:0000269" key="17">
    <source>
    </source>
</evidence>
<evidence type="ECO:0000269" key="18">
    <source>
    </source>
</evidence>
<evidence type="ECO:0000269" key="19">
    <source>
    </source>
</evidence>
<evidence type="ECO:0000269" key="20">
    <source>
    </source>
</evidence>
<evidence type="ECO:0000269" key="21">
    <source>
    </source>
</evidence>
<evidence type="ECO:0000269" key="22">
    <source>
    </source>
</evidence>
<evidence type="ECO:0000269" key="23">
    <source>
    </source>
</evidence>
<evidence type="ECO:0000269" key="24">
    <source>
    </source>
</evidence>
<evidence type="ECO:0000305" key="25"/>
<evidence type="ECO:0007829" key="26">
    <source>
        <dbReference type="PDB" id="1A6Y"/>
    </source>
</evidence>
<evidence type="ECO:0007829" key="27">
    <source>
        <dbReference type="PDB" id="1GA5"/>
    </source>
</evidence>
<evidence type="ECO:0007829" key="28">
    <source>
        <dbReference type="PDB" id="8D8I"/>
    </source>
</evidence>